<sequence>MAKLTKRMRVIRDKVDSTKQYDISEAVALLKELATAKFVESVDVAVNLGIDARKSDQNVRGATVLPHGTGRSVRVAVFTQGANAEAAKAAGADLVGMDDLADQIKKGEFNFDVVIASPDAMRVVGQLGQILGPRGLMPNPKVGTVTPNVAEAVKNAKAGQVRYRNDKNGIIHTTIGKVDFESDKLKENLEALLVALKKAKPTQAKGVYIKKVSLSTTMGAGVAVDQSGLSTTTA</sequence>
<accession>Q2NWR9</accession>
<evidence type="ECO:0000255" key="1">
    <source>
        <dbReference type="HAMAP-Rule" id="MF_01318"/>
    </source>
</evidence>
<evidence type="ECO:0000305" key="2"/>
<gene>
    <name evidence="1" type="primary">rplA</name>
    <name type="ordered locus">SG0131</name>
</gene>
<reference key="1">
    <citation type="journal article" date="2006" name="Genome Res.">
        <title>Massive genome erosion and functional adaptations provide insights into the symbiotic lifestyle of Sodalis glossinidius in the tsetse host.</title>
        <authorList>
            <person name="Toh H."/>
            <person name="Weiss B.L."/>
            <person name="Perkin S.A.H."/>
            <person name="Yamashita A."/>
            <person name="Oshima K."/>
            <person name="Hattori M."/>
            <person name="Aksoy S."/>
        </authorList>
    </citation>
    <scope>NUCLEOTIDE SEQUENCE [LARGE SCALE GENOMIC DNA]</scope>
    <source>
        <strain>morsitans</strain>
    </source>
</reference>
<name>RL1_SODGM</name>
<organism>
    <name type="scientific">Sodalis glossinidius (strain morsitans)</name>
    <dbReference type="NCBI Taxonomy" id="343509"/>
    <lineage>
        <taxon>Bacteria</taxon>
        <taxon>Pseudomonadati</taxon>
        <taxon>Pseudomonadota</taxon>
        <taxon>Gammaproteobacteria</taxon>
        <taxon>Enterobacterales</taxon>
        <taxon>Bruguierivoracaceae</taxon>
        <taxon>Sodalis</taxon>
    </lineage>
</organism>
<keyword id="KW-0678">Repressor</keyword>
<keyword id="KW-0687">Ribonucleoprotein</keyword>
<keyword id="KW-0689">Ribosomal protein</keyword>
<keyword id="KW-0694">RNA-binding</keyword>
<keyword id="KW-0699">rRNA-binding</keyword>
<keyword id="KW-0810">Translation regulation</keyword>
<keyword id="KW-0820">tRNA-binding</keyword>
<feature type="chain" id="PRO_0000308108" description="Large ribosomal subunit protein uL1">
    <location>
        <begin position="1"/>
        <end position="234"/>
    </location>
</feature>
<protein>
    <recommendedName>
        <fullName evidence="1">Large ribosomal subunit protein uL1</fullName>
    </recommendedName>
    <alternativeName>
        <fullName evidence="2">50S ribosomal protein L1</fullName>
    </alternativeName>
</protein>
<dbReference type="EMBL" id="AP008232">
    <property type="protein sequence ID" value="BAE73406.1"/>
    <property type="molecule type" value="Genomic_DNA"/>
</dbReference>
<dbReference type="RefSeq" id="WP_011409995.1">
    <property type="nucleotide sequence ID" value="NC_007712.1"/>
</dbReference>
<dbReference type="SMR" id="Q2NWR9"/>
<dbReference type="STRING" id="343509.SG0131"/>
<dbReference type="KEGG" id="sgl:SG0131"/>
<dbReference type="eggNOG" id="COG0081">
    <property type="taxonomic scope" value="Bacteria"/>
</dbReference>
<dbReference type="HOGENOM" id="CLU_062853_0_0_6"/>
<dbReference type="OrthoDB" id="9803740at2"/>
<dbReference type="BioCyc" id="SGLO343509:SGP1_RS01110-MONOMER"/>
<dbReference type="Proteomes" id="UP000001932">
    <property type="component" value="Chromosome"/>
</dbReference>
<dbReference type="GO" id="GO:0022625">
    <property type="term" value="C:cytosolic large ribosomal subunit"/>
    <property type="evidence" value="ECO:0007669"/>
    <property type="project" value="TreeGrafter"/>
</dbReference>
<dbReference type="GO" id="GO:0019843">
    <property type="term" value="F:rRNA binding"/>
    <property type="evidence" value="ECO:0007669"/>
    <property type="project" value="UniProtKB-UniRule"/>
</dbReference>
<dbReference type="GO" id="GO:0003735">
    <property type="term" value="F:structural constituent of ribosome"/>
    <property type="evidence" value="ECO:0007669"/>
    <property type="project" value="InterPro"/>
</dbReference>
<dbReference type="GO" id="GO:0000049">
    <property type="term" value="F:tRNA binding"/>
    <property type="evidence" value="ECO:0007669"/>
    <property type="project" value="UniProtKB-KW"/>
</dbReference>
<dbReference type="GO" id="GO:0006417">
    <property type="term" value="P:regulation of translation"/>
    <property type="evidence" value="ECO:0007669"/>
    <property type="project" value="UniProtKB-KW"/>
</dbReference>
<dbReference type="GO" id="GO:0006412">
    <property type="term" value="P:translation"/>
    <property type="evidence" value="ECO:0007669"/>
    <property type="project" value="UniProtKB-UniRule"/>
</dbReference>
<dbReference type="CDD" id="cd00403">
    <property type="entry name" value="Ribosomal_L1"/>
    <property type="match status" value="1"/>
</dbReference>
<dbReference type="FunFam" id="3.40.50.790:FF:000001">
    <property type="entry name" value="50S ribosomal protein L1"/>
    <property type="match status" value="1"/>
</dbReference>
<dbReference type="Gene3D" id="3.30.190.20">
    <property type="match status" value="1"/>
</dbReference>
<dbReference type="Gene3D" id="3.40.50.790">
    <property type="match status" value="1"/>
</dbReference>
<dbReference type="HAMAP" id="MF_01318_B">
    <property type="entry name" value="Ribosomal_uL1_B"/>
    <property type="match status" value="1"/>
</dbReference>
<dbReference type="InterPro" id="IPR005878">
    <property type="entry name" value="Ribosom_uL1_bac-type"/>
</dbReference>
<dbReference type="InterPro" id="IPR002143">
    <property type="entry name" value="Ribosomal_uL1"/>
</dbReference>
<dbReference type="InterPro" id="IPR023674">
    <property type="entry name" value="Ribosomal_uL1-like"/>
</dbReference>
<dbReference type="InterPro" id="IPR028364">
    <property type="entry name" value="Ribosomal_uL1/biogenesis"/>
</dbReference>
<dbReference type="InterPro" id="IPR016095">
    <property type="entry name" value="Ribosomal_uL1_3-a/b-sand"/>
</dbReference>
<dbReference type="InterPro" id="IPR023673">
    <property type="entry name" value="Ribosomal_uL1_CS"/>
</dbReference>
<dbReference type="NCBIfam" id="TIGR01169">
    <property type="entry name" value="rplA_bact"/>
    <property type="match status" value="1"/>
</dbReference>
<dbReference type="PANTHER" id="PTHR36427">
    <property type="entry name" value="54S RIBOSOMAL PROTEIN L1, MITOCHONDRIAL"/>
    <property type="match status" value="1"/>
</dbReference>
<dbReference type="PANTHER" id="PTHR36427:SF3">
    <property type="entry name" value="LARGE RIBOSOMAL SUBUNIT PROTEIN UL1M"/>
    <property type="match status" value="1"/>
</dbReference>
<dbReference type="Pfam" id="PF00687">
    <property type="entry name" value="Ribosomal_L1"/>
    <property type="match status" value="1"/>
</dbReference>
<dbReference type="PIRSF" id="PIRSF002155">
    <property type="entry name" value="Ribosomal_L1"/>
    <property type="match status" value="1"/>
</dbReference>
<dbReference type="SUPFAM" id="SSF56808">
    <property type="entry name" value="Ribosomal protein L1"/>
    <property type="match status" value="1"/>
</dbReference>
<dbReference type="PROSITE" id="PS01199">
    <property type="entry name" value="RIBOSOMAL_L1"/>
    <property type="match status" value="1"/>
</dbReference>
<proteinExistence type="inferred from homology"/>
<comment type="function">
    <text evidence="1">Binds directly to 23S rRNA. The L1 stalk is quite mobile in the ribosome, and is involved in E site tRNA release.</text>
</comment>
<comment type="function">
    <text evidence="1">Protein L1 is also a translational repressor protein, it controls the translation of the L11 operon by binding to its mRNA.</text>
</comment>
<comment type="subunit">
    <text evidence="1">Part of the 50S ribosomal subunit.</text>
</comment>
<comment type="similarity">
    <text evidence="1">Belongs to the universal ribosomal protein uL1 family.</text>
</comment>